<sequence>MGFHIYEIKARQIIDSRGNPTVEADVILEDGTCGRSAVPSGASTGINEAVELRDGDKSVYMGKGVLKAIENIKNIIAPELEGMSALNQVAIDRKMLELDGTPTKEKLGANAILAVSMATAKAAAKYLGLKVYQYLGAYKANILPTPMCNIINGGAHSDNSVDFQEFMIMPVGAKTFSEAIRMAVEVFHTLKGILNGKGYATSVGDEGGFAPNLKSNEEACEMIIEAIKKAGYEPGKDIAIALDPATSELYDPKTKKYVLKWSTKEELTSEQMVEYWSKWVEKYPIISIEDGMAEEDWDGWKKLTDKIGHKIQLVGDDLFVTNTSFLKKGIEMGVANSILIKVNQIGTLTETFEAVEMAKKAGYTAIVSHRSGETEDTTIADLVVALGTGQIKTGSLSRTDRIAKYNQLIRIEEELETTAEYHGKNVFYSIKQKQIKSL</sequence>
<comment type="function">
    <text evidence="1">Catalyzes the reversible conversion of 2-phosphoglycerate (2-PG) into phosphoenolpyruvate (PEP). It is essential for the degradation of carbohydrates via glycolysis.</text>
</comment>
<comment type="catalytic activity">
    <reaction evidence="1">
        <text>(2R)-2-phosphoglycerate = phosphoenolpyruvate + H2O</text>
        <dbReference type="Rhea" id="RHEA:10164"/>
        <dbReference type="ChEBI" id="CHEBI:15377"/>
        <dbReference type="ChEBI" id="CHEBI:58289"/>
        <dbReference type="ChEBI" id="CHEBI:58702"/>
        <dbReference type="EC" id="4.2.1.11"/>
    </reaction>
</comment>
<comment type="cofactor">
    <cofactor evidence="1">
        <name>Mg(2+)</name>
        <dbReference type="ChEBI" id="CHEBI:18420"/>
    </cofactor>
    <text evidence="1">Binds a second Mg(2+) ion via substrate during catalysis.</text>
</comment>
<comment type="pathway">
    <text evidence="1">Carbohydrate degradation; glycolysis; pyruvate from D-glyceraldehyde 3-phosphate: step 4/5.</text>
</comment>
<comment type="subcellular location">
    <subcellularLocation>
        <location evidence="1">Cytoplasm</location>
    </subcellularLocation>
    <subcellularLocation>
        <location evidence="1">Secreted</location>
    </subcellularLocation>
    <subcellularLocation>
        <location evidence="1">Cell surface</location>
    </subcellularLocation>
    <text evidence="1">Fractions of enolase are present in both the cytoplasm and on the cell surface.</text>
</comment>
<comment type="similarity">
    <text evidence="1">Belongs to the enolase family.</text>
</comment>
<reference key="1">
    <citation type="journal article" date="2004" name="Nucleic Acids Res.">
        <title>Comparative analysis of the Borrelia garinii genome.</title>
        <authorList>
            <person name="Gloeckner G."/>
            <person name="Lehmann R."/>
            <person name="Romualdi A."/>
            <person name="Pradella S."/>
            <person name="Schulte-Spechtel U."/>
            <person name="Schilhabel M."/>
            <person name="Wilske B."/>
            <person name="Suehnel J."/>
            <person name="Platzer M."/>
        </authorList>
    </citation>
    <scope>NUCLEOTIDE SEQUENCE [LARGE SCALE GENOMIC DNA]</scope>
    <source>
        <strain>ATCC BAA-2496 / DSM 23469 / PBi</strain>
    </source>
</reference>
<feature type="chain" id="PRO_0000133849" description="Enolase">
    <location>
        <begin position="1"/>
        <end position="438"/>
    </location>
</feature>
<feature type="active site" description="Proton donor" evidence="1">
    <location>
        <position position="206"/>
    </location>
</feature>
<feature type="active site" description="Proton acceptor" evidence="1">
    <location>
        <position position="341"/>
    </location>
</feature>
<feature type="binding site" evidence="1">
    <location>
        <position position="164"/>
    </location>
    <ligand>
        <name>(2R)-2-phosphoglycerate</name>
        <dbReference type="ChEBI" id="CHEBI:58289"/>
    </ligand>
</feature>
<feature type="binding site" evidence="1">
    <location>
        <position position="243"/>
    </location>
    <ligand>
        <name>Mg(2+)</name>
        <dbReference type="ChEBI" id="CHEBI:18420"/>
    </ligand>
</feature>
<feature type="binding site" evidence="1">
    <location>
        <position position="289"/>
    </location>
    <ligand>
        <name>Mg(2+)</name>
        <dbReference type="ChEBI" id="CHEBI:18420"/>
    </ligand>
</feature>
<feature type="binding site" evidence="1">
    <location>
        <position position="316"/>
    </location>
    <ligand>
        <name>Mg(2+)</name>
        <dbReference type="ChEBI" id="CHEBI:18420"/>
    </ligand>
</feature>
<feature type="binding site" evidence="1">
    <location>
        <position position="341"/>
    </location>
    <ligand>
        <name>(2R)-2-phosphoglycerate</name>
        <dbReference type="ChEBI" id="CHEBI:58289"/>
    </ligand>
</feature>
<feature type="binding site" evidence="1">
    <location>
        <position position="370"/>
    </location>
    <ligand>
        <name>(2R)-2-phosphoglycerate</name>
        <dbReference type="ChEBI" id="CHEBI:58289"/>
    </ligand>
</feature>
<feature type="binding site" evidence="1">
    <location>
        <position position="371"/>
    </location>
    <ligand>
        <name>(2R)-2-phosphoglycerate</name>
        <dbReference type="ChEBI" id="CHEBI:58289"/>
    </ligand>
</feature>
<feature type="binding site" evidence="1">
    <location>
        <position position="392"/>
    </location>
    <ligand>
        <name>(2R)-2-phosphoglycerate</name>
        <dbReference type="ChEBI" id="CHEBI:58289"/>
    </ligand>
</feature>
<proteinExistence type="inferred from homology"/>
<keyword id="KW-0963">Cytoplasm</keyword>
<keyword id="KW-0324">Glycolysis</keyword>
<keyword id="KW-0456">Lyase</keyword>
<keyword id="KW-0460">Magnesium</keyword>
<keyword id="KW-0479">Metal-binding</keyword>
<keyword id="KW-0964">Secreted</keyword>
<gene>
    <name evidence="1" type="primary">eno</name>
    <name type="ordered locus">BG0338</name>
</gene>
<protein>
    <recommendedName>
        <fullName evidence="1">Enolase</fullName>
        <ecNumber evidence="1">4.2.1.11</ecNumber>
    </recommendedName>
    <alternativeName>
        <fullName evidence="1">2-phospho-D-glycerate hydro-lyase</fullName>
    </alternativeName>
    <alternativeName>
        <fullName evidence="1">2-phosphoglycerate dehydratase</fullName>
    </alternativeName>
</protein>
<accession>Q661T0</accession>
<dbReference type="EC" id="4.2.1.11" evidence="1"/>
<dbReference type="EMBL" id="CP000013">
    <property type="protein sequence ID" value="AAU07191.1"/>
    <property type="molecule type" value="Genomic_DNA"/>
</dbReference>
<dbReference type="RefSeq" id="WP_011193666.1">
    <property type="nucleotide sequence ID" value="NZ_CP028872.1"/>
</dbReference>
<dbReference type="SMR" id="Q661T0"/>
<dbReference type="GeneID" id="45161126"/>
<dbReference type="KEGG" id="bga:BG0338"/>
<dbReference type="eggNOG" id="COG0148">
    <property type="taxonomic scope" value="Bacteria"/>
</dbReference>
<dbReference type="HOGENOM" id="CLU_031223_2_1_12"/>
<dbReference type="OrthoDB" id="9804716at2"/>
<dbReference type="UniPathway" id="UPA00109">
    <property type="reaction ID" value="UER00187"/>
</dbReference>
<dbReference type="Proteomes" id="UP000002276">
    <property type="component" value="Chromosome"/>
</dbReference>
<dbReference type="GO" id="GO:0009986">
    <property type="term" value="C:cell surface"/>
    <property type="evidence" value="ECO:0007669"/>
    <property type="project" value="UniProtKB-SubCell"/>
</dbReference>
<dbReference type="GO" id="GO:0005576">
    <property type="term" value="C:extracellular region"/>
    <property type="evidence" value="ECO:0007669"/>
    <property type="project" value="UniProtKB-SubCell"/>
</dbReference>
<dbReference type="GO" id="GO:0000015">
    <property type="term" value="C:phosphopyruvate hydratase complex"/>
    <property type="evidence" value="ECO:0007669"/>
    <property type="project" value="InterPro"/>
</dbReference>
<dbReference type="GO" id="GO:0000287">
    <property type="term" value="F:magnesium ion binding"/>
    <property type="evidence" value="ECO:0007669"/>
    <property type="project" value="UniProtKB-UniRule"/>
</dbReference>
<dbReference type="GO" id="GO:0004634">
    <property type="term" value="F:phosphopyruvate hydratase activity"/>
    <property type="evidence" value="ECO:0007669"/>
    <property type="project" value="UniProtKB-UniRule"/>
</dbReference>
<dbReference type="GO" id="GO:0006096">
    <property type="term" value="P:glycolytic process"/>
    <property type="evidence" value="ECO:0007669"/>
    <property type="project" value="UniProtKB-UniRule"/>
</dbReference>
<dbReference type="CDD" id="cd03313">
    <property type="entry name" value="enolase"/>
    <property type="match status" value="1"/>
</dbReference>
<dbReference type="FunFam" id="3.20.20.120:FF:000001">
    <property type="entry name" value="Enolase"/>
    <property type="match status" value="1"/>
</dbReference>
<dbReference type="FunFam" id="3.30.390.10:FF:000001">
    <property type="entry name" value="Enolase"/>
    <property type="match status" value="1"/>
</dbReference>
<dbReference type="Gene3D" id="3.20.20.120">
    <property type="entry name" value="Enolase-like C-terminal domain"/>
    <property type="match status" value="1"/>
</dbReference>
<dbReference type="Gene3D" id="3.30.390.10">
    <property type="entry name" value="Enolase-like, N-terminal domain"/>
    <property type="match status" value="1"/>
</dbReference>
<dbReference type="HAMAP" id="MF_00318">
    <property type="entry name" value="Enolase"/>
    <property type="match status" value="1"/>
</dbReference>
<dbReference type="InterPro" id="IPR000941">
    <property type="entry name" value="Enolase"/>
</dbReference>
<dbReference type="InterPro" id="IPR036849">
    <property type="entry name" value="Enolase-like_C_sf"/>
</dbReference>
<dbReference type="InterPro" id="IPR029017">
    <property type="entry name" value="Enolase-like_N"/>
</dbReference>
<dbReference type="InterPro" id="IPR020810">
    <property type="entry name" value="Enolase_C"/>
</dbReference>
<dbReference type="InterPro" id="IPR020809">
    <property type="entry name" value="Enolase_CS"/>
</dbReference>
<dbReference type="InterPro" id="IPR020811">
    <property type="entry name" value="Enolase_N"/>
</dbReference>
<dbReference type="NCBIfam" id="TIGR01060">
    <property type="entry name" value="eno"/>
    <property type="match status" value="1"/>
</dbReference>
<dbReference type="PANTHER" id="PTHR11902">
    <property type="entry name" value="ENOLASE"/>
    <property type="match status" value="1"/>
</dbReference>
<dbReference type="PANTHER" id="PTHR11902:SF1">
    <property type="entry name" value="ENOLASE"/>
    <property type="match status" value="1"/>
</dbReference>
<dbReference type="Pfam" id="PF00113">
    <property type="entry name" value="Enolase_C"/>
    <property type="match status" value="1"/>
</dbReference>
<dbReference type="Pfam" id="PF03952">
    <property type="entry name" value="Enolase_N"/>
    <property type="match status" value="1"/>
</dbReference>
<dbReference type="PIRSF" id="PIRSF001400">
    <property type="entry name" value="Enolase"/>
    <property type="match status" value="1"/>
</dbReference>
<dbReference type="PRINTS" id="PR00148">
    <property type="entry name" value="ENOLASE"/>
</dbReference>
<dbReference type="SFLD" id="SFLDF00002">
    <property type="entry name" value="enolase"/>
    <property type="match status" value="1"/>
</dbReference>
<dbReference type="SFLD" id="SFLDG00178">
    <property type="entry name" value="enolase"/>
    <property type="match status" value="1"/>
</dbReference>
<dbReference type="SMART" id="SM01192">
    <property type="entry name" value="Enolase_C"/>
    <property type="match status" value="1"/>
</dbReference>
<dbReference type="SMART" id="SM01193">
    <property type="entry name" value="Enolase_N"/>
    <property type="match status" value="1"/>
</dbReference>
<dbReference type="SUPFAM" id="SSF51604">
    <property type="entry name" value="Enolase C-terminal domain-like"/>
    <property type="match status" value="1"/>
</dbReference>
<dbReference type="SUPFAM" id="SSF54826">
    <property type="entry name" value="Enolase N-terminal domain-like"/>
    <property type="match status" value="1"/>
</dbReference>
<dbReference type="PROSITE" id="PS00164">
    <property type="entry name" value="ENOLASE"/>
    <property type="match status" value="1"/>
</dbReference>
<organism>
    <name type="scientific">Borrelia garinii subsp. bavariensis (strain ATCC BAA-2496 / DSM 23469 / PBi)</name>
    <name type="common">Borreliella bavariensis</name>
    <dbReference type="NCBI Taxonomy" id="290434"/>
    <lineage>
        <taxon>Bacteria</taxon>
        <taxon>Pseudomonadati</taxon>
        <taxon>Spirochaetota</taxon>
        <taxon>Spirochaetia</taxon>
        <taxon>Spirochaetales</taxon>
        <taxon>Borreliaceae</taxon>
        <taxon>Borreliella</taxon>
    </lineage>
</organism>
<name>ENO_BORGP</name>
<evidence type="ECO:0000255" key="1">
    <source>
        <dbReference type="HAMAP-Rule" id="MF_00318"/>
    </source>
</evidence>